<evidence type="ECO:0000305" key="1"/>
<reference key="1">
    <citation type="journal article" date="2000" name="Nature">
        <title>Sequence and analysis of chromosome 1 of the plant Arabidopsis thaliana.</title>
        <authorList>
            <person name="Theologis A."/>
            <person name="Ecker J.R."/>
            <person name="Palm C.J."/>
            <person name="Federspiel N.A."/>
            <person name="Kaul S."/>
            <person name="White O."/>
            <person name="Alonso J."/>
            <person name="Altafi H."/>
            <person name="Araujo R."/>
            <person name="Bowman C.L."/>
            <person name="Brooks S.Y."/>
            <person name="Buehler E."/>
            <person name="Chan A."/>
            <person name="Chao Q."/>
            <person name="Chen H."/>
            <person name="Cheuk R.F."/>
            <person name="Chin C.W."/>
            <person name="Chung M.K."/>
            <person name="Conn L."/>
            <person name="Conway A.B."/>
            <person name="Conway A.R."/>
            <person name="Creasy T.H."/>
            <person name="Dewar K."/>
            <person name="Dunn P."/>
            <person name="Etgu P."/>
            <person name="Feldblyum T.V."/>
            <person name="Feng J.-D."/>
            <person name="Fong B."/>
            <person name="Fujii C.Y."/>
            <person name="Gill J.E."/>
            <person name="Goldsmith A.D."/>
            <person name="Haas B."/>
            <person name="Hansen N.F."/>
            <person name="Hughes B."/>
            <person name="Huizar L."/>
            <person name="Hunter J.L."/>
            <person name="Jenkins J."/>
            <person name="Johnson-Hopson C."/>
            <person name="Khan S."/>
            <person name="Khaykin E."/>
            <person name="Kim C.J."/>
            <person name="Koo H.L."/>
            <person name="Kremenetskaia I."/>
            <person name="Kurtz D.B."/>
            <person name="Kwan A."/>
            <person name="Lam B."/>
            <person name="Langin-Hooper S."/>
            <person name="Lee A."/>
            <person name="Lee J.M."/>
            <person name="Lenz C.A."/>
            <person name="Li J.H."/>
            <person name="Li Y.-P."/>
            <person name="Lin X."/>
            <person name="Liu S.X."/>
            <person name="Liu Z.A."/>
            <person name="Luros J.S."/>
            <person name="Maiti R."/>
            <person name="Marziali A."/>
            <person name="Militscher J."/>
            <person name="Miranda M."/>
            <person name="Nguyen M."/>
            <person name="Nierman W.C."/>
            <person name="Osborne B.I."/>
            <person name="Pai G."/>
            <person name="Peterson J."/>
            <person name="Pham P.K."/>
            <person name="Rizzo M."/>
            <person name="Rooney T."/>
            <person name="Rowley D."/>
            <person name="Sakano H."/>
            <person name="Salzberg S.L."/>
            <person name="Schwartz J.R."/>
            <person name="Shinn P."/>
            <person name="Southwick A.M."/>
            <person name="Sun H."/>
            <person name="Tallon L.J."/>
            <person name="Tambunga G."/>
            <person name="Toriumi M.J."/>
            <person name="Town C.D."/>
            <person name="Utterback T."/>
            <person name="Van Aken S."/>
            <person name="Vaysberg M."/>
            <person name="Vysotskaia V.S."/>
            <person name="Walker M."/>
            <person name="Wu D."/>
            <person name="Yu G."/>
            <person name="Fraser C.M."/>
            <person name="Venter J.C."/>
            <person name="Davis R.W."/>
        </authorList>
    </citation>
    <scope>NUCLEOTIDE SEQUENCE [LARGE SCALE GENOMIC DNA]</scope>
    <source>
        <strain>cv. Columbia</strain>
    </source>
</reference>
<reference key="2">
    <citation type="journal article" date="2017" name="Plant J.">
        <title>Araport11: a complete reannotation of the Arabidopsis thaliana reference genome.</title>
        <authorList>
            <person name="Cheng C.Y."/>
            <person name="Krishnakumar V."/>
            <person name="Chan A.P."/>
            <person name="Thibaud-Nissen F."/>
            <person name="Schobel S."/>
            <person name="Town C.D."/>
        </authorList>
    </citation>
    <scope>GENOME REANNOTATION</scope>
    <source>
        <strain>cv. Columbia</strain>
    </source>
</reference>
<reference key="3">
    <citation type="journal article" date="2003" name="Science">
        <title>Empirical analysis of transcriptional activity in the Arabidopsis genome.</title>
        <authorList>
            <person name="Yamada K."/>
            <person name="Lim J."/>
            <person name="Dale J.M."/>
            <person name="Chen H."/>
            <person name="Shinn P."/>
            <person name="Palm C.J."/>
            <person name="Southwick A.M."/>
            <person name="Wu H.C."/>
            <person name="Kim C.J."/>
            <person name="Nguyen M."/>
            <person name="Pham P.K."/>
            <person name="Cheuk R.F."/>
            <person name="Karlin-Newmann G."/>
            <person name="Liu S.X."/>
            <person name="Lam B."/>
            <person name="Sakano H."/>
            <person name="Wu T."/>
            <person name="Yu G."/>
            <person name="Miranda M."/>
            <person name="Quach H.L."/>
            <person name="Tripp M."/>
            <person name="Chang C.H."/>
            <person name="Lee J.M."/>
            <person name="Toriumi M.J."/>
            <person name="Chan M.M."/>
            <person name="Tang C.C."/>
            <person name="Onodera C.S."/>
            <person name="Deng J.M."/>
            <person name="Akiyama K."/>
            <person name="Ansari Y."/>
            <person name="Arakawa T."/>
            <person name="Banh J."/>
            <person name="Banno F."/>
            <person name="Bowser L."/>
            <person name="Brooks S.Y."/>
            <person name="Carninci P."/>
            <person name="Chao Q."/>
            <person name="Choy N."/>
            <person name="Enju A."/>
            <person name="Goldsmith A.D."/>
            <person name="Gurjal M."/>
            <person name="Hansen N.F."/>
            <person name="Hayashizaki Y."/>
            <person name="Johnson-Hopson C."/>
            <person name="Hsuan V.W."/>
            <person name="Iida K."/>
            <person name="Karnes M."/>
            <person name="Khan S."/>
            <person name="Koesema E."/>
            <person name="Ishida J."/>
            <person name="Jiang P.X."/>
            <person name="Jones T."/>
            <person name="Kawai J."/>
            <person name="Kamiya A."/>
            <person name="Meyers C."/>
            <person name="Nakajima M."/>
            <person name="Narusaka M."/>
            <person name="Seki M."/>
            <person name="Sakurai T."/>
            <person name="Satou M."/>
            <person name="Tamse R."/>
            <person name="Vaysberg M."/>
            <person name="Wallender E.K."/>
            <person name="Wong C."/>
            <person name="Yamamura Y."/>
            <person name="Yuan S."/>
            <person name="Shinozaki K."/>
            <person name="Davis R.W."/>
            <person name="Theologis A."/>
            <person name="Ecker J.R."/>
        </authorList>
    </citation>
    <scope>NUCLEOTIDE SEQUENCE [LARGE SCALE MRNA]</scope>
    <source>
        <strain>cv. Columbia</strain>
    </source>
</reference>
<reference key="4">
    <citation type="submission" date="2006-07" db="EMBL/GenBank/DDBJ databases">
        <title>Large-scale analysis of RIKEN Arabidopsis full-length (RAFL) cDNAs.</title>
        <authorList>
            <person name="Totoki Y."/>
            <person name="Seki M."/>
            <person name="Ishida J."/>
            <person name="Nakajima M."/>
            <person name="Enju A."/>
            <person name="Kamiya A."/>
            <person name="Narusaka M."/>
            <person name="Shin-i T."/>
            <person name="Nakagawa M."/>
            <person name="Sakamoto N."/>
            <person name="Oishi K."/>
            <person name="Kohara Y."/>
            <person name="Kobayashi M."/>
            <person name="Toyoda A."/>
            <person name="Sakaki Y."/>
            <person name="Sakurai T."/>
            <person name="Iida K."/>
            <person name="Akiyama K."/>
            <person name="Satou M."/>
            <person name="Toyoda T."/>
            <person name="Konagaya A."/>
            <person name="Carninci P."/>
            <person name="Kawai J."/>
            <person name="Hayashizaki Y."/>
            <person name="Shinozaki K."/>
        </authorList>
    </citation>
    <scope>NUCLEOTIDE SEQUENCE [LARGE SCALE MRNA]</scope>
    <source>
        <strain>cv. Columbia</strain>
    </source>
</reference>
<reference key="5">
    <citation type="journal article" date="2004" name="Plant Cell">
        <title>Genome-wide analysis of Arabidopsis pentatricopeptide repeat proteins reveals their essential role in organelle biogenesis.</title>
        <authorList>
            <person name="Lurin C."/>
            <person name="Andres C."/>
            <person name="Aubourg S."/>
            <person name="Bellaoui M."/>
            <person name="Bitton F."/>
            <person name="Bruyere C."/>
            <person name="Caboche M."/>
            <person name="Debast C."/>
            <person name="Gualberto J."/>
            <person name="Hoffmann B."/>
            <person name="Lecharny A."/>
            <person name="Le Ret M."/>
            <person name="Martin-Magniette M.-L."/>
            <person name="Mireau H."/>
            <person name="Peeters N."/>
            <person name="Renou J.-P."/>
            <person name="Szurek B."/>
            <person name="Taconnat L."/>
            <person name="Small I."/>
        </authorList>
    </citation>
    <scope>GENE FAMILY</scope>
</reference>
<keyword id="KW-1185">Reference proteome</keyword>
<keyword id="KW-0677">Repeat</keyword>
<gene>
    <name type="ordered locus">At1g01970</name>
    <name type="ORF">F22M8.10</name>
</gene>
<proteinExistence type="evidence at transcript level"/>
<accession>Q9LPC4</accession>
<organism>
    <name type="scientific">Arabidopsis thaliana</name>
    <name type="common">Mouse-ear cress</name>
    <dbReference type="NCBI Taxonomy" id="3702"/>
    <lineage>
        <taxon>Eukaryota</taxon>
        <taxon>Viridiplantae</taxon>
        <taxon>Streptophyta</taxon>
        <taxon>Embryophyta</taxon>
        <taxon>Tracheophyta</taxon>
        <taxon>Spermatophyta</taxon>
        <taxon>Magnoliopsida</taxon>
        <taxon>eudicotyledons</taxon>
        <taxon>Gunneridae</taxon>
        <taxon>Pentapetalae</taxon>
        <taxon>rosids</taxon>
        <taxon>malvids</taxon>
        <taxon>Brassicales</taxon>
        <taxon>Brassicaceae</taxon>
        <taxon>Camelineae</taxon>
        <taxon>Arabidopsis</taxon>
    </lineage>
</organism>
<name>PPR1_ARATH</name>
<sequence length="409" mass="46077">MGIYSCSAVLSFGLKCPLVIARHRLYHRMFRRNPLLVESHLNRLCSCKCNASLAIGEVVEKEDAEQSRSFNWADVGLNLTEEQDEAITRIPIKMSKRCQALMRQIICFSPEKGSFCDLLGAWLRRMNPIRADWLSILKELKNLDSPFYIKVAEFSLLQDSFEANARDYTKIIHYYGKLNQVEDAERTLLSMKNRGFLIDQVTLTAMVQLYSKAGCHKLAEETFNEIKLLGEPLDYRSYGSMIMAYIRAGVPEKGESLLREMDSQEICAGREVYKALLRDYSMGGDAEGAKRVFDAVQIAGITPDVKLCGLLINAYSVSGQSQNARLAFENMRKAGIKATDKCVALVLAAYEKEEKLNEALGFLVELEKDSIMLGKEASAVLAQWFKKLGVVEEVELLLREFSSSQSQPL</sequence>
<feature type="chain" id="PRO_0000342742" description="Pentatricopeptide repeat-containing protein At1g01970">
    <location>
        <begin position="1"/>
        <end position="409"/>
    </location>
</feature>
<feature type="repeat" description="PPR 1">
    <location>
        <begin position="164"/>
        <end position="198"/>
    </location>
</feature>
<feature type="repeat" description="PPR 2">
    <location>
        <begin position="199"/>
        <end position="233"/>
    </location>
</feature>
<feature type="repeat" description="PPR 3">
    <location>
        <begin position="234"/>
        <end position="268"/>
    </location>
</feature>
<feature type="repeat" description="PPR 4">
    <location>
        <begin position="269"/>
        <end position="303"/>
    </location>
</feature>
<feature type="repeat" description="PPR 5">
    <location>
        <begin position="304"/>
        <end position="338"/>
    </location>
</feature>
<feature type="repeat" description="PPR 6">
    <location>
        <begin position="339"/>
        <end position="373"/>
    </location>
</feature>
<comment type="similarity">
    <text evidence="1">Belongs to the PPR family. P subfamily.</text>
</comment>
<comment type="online information" name="Pentatricopeptide repeat proteins">
    <link uri="https://ppr.plantenergy.uwa.edu.au"/>
</comment>
<protein>
    <recommendedName>
        <fullName>Pentatricopeptide repeat-containing protein At1g01970</fullName>
    </recommendedName>
</protein>
<dbReference type="EMBL" id="AC020622">
    <property type="protein sequence ID" value="AAF76475.1"/>
    <property type="molecule type" value="Genomic_DNA"/>
</dbReference>
<dbReference type="EMBL" id="CP002684">
    <property type="protein sequence ID" value="AEE27361.1"/>
    <property type="molecule type" value="Genomic_DNA"/>
</dbReference>
<dbReference type="EMBL" id="BT010352">
    <property type="protein sequence ID" value="AAQ56795.1"/>
    <property type="molecule type" value="mRNA"/>
</dbReference>
<dbReference type="EMBL" id="AK227853">
    <property type="protein sequence ID" value="BAE99830.1"/>
    <property type="molecule type" value="mRNA"/>
</dbReference>
<dbReference type="PIR" id="F86151">
    <property type="entry name" value="F86151"/>
</dbReference>
<dbReference type="RefSeq" id="NP_171699.1">
    <property type="nucleotide sequence ID" value="NM_100077.4"/>
</dbReference>
<dbReference type="SMR" id="Q9LPC4"/>
<dbReference type="BioGRID" id="24534">
    <property type="interactions" value="1"/>
</dbReference>
<dbReference type="FunCoup" id="Q9LPC4">
    <property type="interactions" value="1492"/>
</dbReference>
<dbReference type="IntAct" id="Q9LPC4">
    <property type="interactions" value="1"/>
</dbReference>
<dbReference type="STRING" id="3702.Q9LPC4"/>
<dbReference type="PaxDb" id="3702-AT1G01970.1"/>
<dbReference type="ProteomicsDB" id="226368"/>
<dbReference type="EnsemblPlants" id="AT1G01970.1">
    <property type="protein sequence ID" value="AT1G01970.1"/>
    <property type="gene ID" value="AT1G01970"/>
</dbReference>
<dbReference type="GeneID" id="839299"/>
<dbReference type="Gramene" id="AT1G01970.1">
    <property type="protein sequence ID" value="AT1G01970.1"/>
    <property type="gene ID" value="AT1G01970"/>
</dbReference>
<dbReference type="KEGG" id="ath:AT1G01970"/>
<dbReference type="Araport" id="AT1G01970"/>
<dbReference type="TAIR" id="AT1G01970"/>
<dbReference type="eggNOG" id="KOG4197">
    <property type="taxonomic scope" value="Eukaryota"/>
</dbReference>
<dbReference type="HOGENOM" id="CLU_053045_0_0_1"/>
<dbReference type="InParanoid" id="Q9LPC4"/>
<dbReference type="OMA" id="PKMTKRC"/>
<dbReference type="PhylomeDB" id="Q9LPC4"/>
<dbReference type="PRO" id="PR:Q9LPC4"/>
<dbReference type="Proteomes" id="UP000006548">
    <property type="component" value="Chromosome 1"/>
</dbReference>
<dbReference type="ExpressionAtlas" id="Q9LPC4">
    <property type="expression patterns" value="baseline and differential"/>
</dbReference>
<dbReference type="Gene3D" id="1.25.40.10">
    <property type="entry name" value="Tetratricopeptide repeat domain"/>
    <property type="match status" value="2"/>
</dbReference>
<dbReference type="InterPro" id="IPR002885">
    <property type="entry name" value="Pentatricopeptide_rpt"/>
</dbReference>
<dbReference type="InterPro" id="IPR011990">
    <property type="entry name" value="TPR-like_helical_dom_sf"/>
</dbReference>
<dbReference type="NCBIfam" id="TIGR00756">
    <property type="entry name" value="PPR"/>
    <property type="match status" value="2"/>
</dbReference>
<dbReference type="PANTHER" id="PTHR46862">
    <property type="entry name" value="OS07G0661900 PROTEIN"/>
    <property type="match status" value="1"/>
</dbReference>
<dbReference type="PANTHER" id="PTHR46862:SF3">
    <property type="entry name" value="OS07G0661900 PROTEIN"/>
    <property type="match status" value="1"/>
</dbReference>
<dbReference type="Pfam" id="PF01535">
    <property type="entry name" value="PPR"/>
    <property type="match status" value="3"/>
</dbReference>
<dbReference type="Pfam" id="PF13812">
    <property type="entry name" value="PPR_3"/>
    <property type="match status" value="1"/>
</dbReference>
<dbReference type="PROSITE" id="PS51375">
    <property type="entry name" value="PPR"/>
    <property type="match status" value="6"/>
</dbReference>